<organism>
    <name type="scientific">Streptococcus agalactiae serotype V (strain ATCC BAA-611 / 2603 V/R)</name>
    <dbReference type="NCBI Taxonomy" id="208435"/>
    <lineage>
        <taxon>Bacteria</taxon>
        <taxon>Bacillati</taxon>
        <taxon>Bacillota</taxon>
        <taxon>Bacilli</taxon>
        <taxon>Lactobacillales</taxon>
        <taxon>Streptococcaceae</taxon>
        <taxon>Streptococcus</taxon>
    </lineage>
</organism>
<sequence>MSKTVVRKNESLDDALRRFKRSVTKAGTLQESRKREFYEKPSVKRKRKSEAARKRKKF</sequence>
<evidence type="ECO:0000255" key="1">
    <source>
        <dbReference type="HAMAP-Rule" id="MF_00358"/>
    </source>
</evidence>
<evidence type="ECO:0000256" key="2">
    <source>
        <dbReference type="SAM" id="MobiDB-lite"/>
    </source>
</evidence>
<evidence type="ECO:0000305" key="3"/>
<dbReference type="EMBL" id="AE009948">
    <property type="protein sequence ID" value="AAN00299.1"/>
    <property type="molecule type" value="Genomic_DNA"/>
</dbReference>
<dbReference type="RefSeq" id="NP_688426.1">
    <property type="nucleotide sequence ID" value="NC_004116.1"/>
</dbReference>
<dbReference type="RefSeq" id="WP_000048058.1">
    <property type="nucleotide sequence ID" value="NC_004116.1"/>
</dbReference>
<dbReference type="SMR" id="P66530"/>
<dbReference type="STRING" id="208435.SAG1429"/>
<dbReference type="GeneID" id="93936799"/>
<dbReference type="KEGG" id="sag:SAG1429"/>
<dbReference type="PATRIC" id="fig|208435.3.peg.1437"/>
<dbReference type="HOGENOM" id="CLU_159258_3_2_9"/>
<dbReference type="OrthoDB" id="9799244at2"/>
<dbReference type="PRO" id="PR:P66530"/>
<dbReference type="Proteomes" id="UP000000821">
    <property type="component" value="Chromosome"/>
</dbReference>
<dbReference type="GO" id="GO:1990904">
    <property type="term" value="C:ribonucleoprotein complex"/>
    <property type="evidence" value="ECO:0007669"/>
    <property type="project" value="UniProtKB-KW"/>
</dbReference>
<dbReference type="GO" id="GO:0005840">
    <property type="term" value="C:ribosome"/>
    <property type="evidence" value="ECO:0007669"/>
    <property type="project" value="UniProtKB-KW"/>
</dbReference>
<dbReference type="GO" id="GO:0003735">
    <property type="term" value="F:structural constituent of ribosome"/>
    <property type="evidence" value="ECO:0007669"/>
    <property type="project" value="InterPro"/>
</dbReference>
<dbReference type="GO" id="GO:0006412">
    <property type="term" value="P:translation"/>
    <property type="evidence" value="ECO:0007669"/>
    <property type="project" value="UniProtKB-UniRule"/>
</dbReference>
<dbReference type="Gene3D" id="1.20.5.1150">
    <property type="entry name" value="Ribosomal protein S8"/>
    <property type="match status" value="1"/>
</dbReference>
<dbReference type="HAMAP" id="MF_00358">
    <property type="entry name" value="Ribosomal_bS21"/>
    <property type="match status" value="1"/>
</dbReference>
<dbReference type="InterPro" id="IPR001911">
    <property type="entry name" value="Ribosomal_bS21"/>
</dbReference>
<dbReference type="InterPro" id="IPR018278">
    <property type="entry name" value="Ribosomal_bS21_CS"/>
</dbReference>
<dbReference type="InterPro" id="IPR038380">
    <property type="entry name" value="Ribosomal_bS21_sf"/>
</dbReference>
<dbReference type="NCBIfam" id="TIGR00030">
    <property type="entry name" value="S21p"/>
    <property type="match status" value="1"/>
</dbReference>
<dbReference type="PANTHER" id="PTHR21109">
    <property type="entry name" value="MITOCHONDRIAL 28S RIBOSOMAL PROTEIN S21"/>
    <property type="match status" value="1"/>
</dbReference>
<dbReference type="PANTHER" id="PTHR21109:SF22">
    <property type="entry name" value="SMALL RIBOSOMAL SUBUNIT PROTEIN BS21"/>
    <property type="match status" value="1"/>
</dbReference>
<dbReference type="Pfam" id="PF01165">
    <property type="entry name" value="Ribosomal_S21"/>
    <property type="match status" value="1"/>
</dbReference>
<dbReference type="PRINTS" id="PR00976">
    <property type="entry name" value="RIBOSOMALS21"/>
</dbReference>
<dbReference type="PROSITE" id="PS01181">
    <property type="entry name" value="RIBOSOMAL_S21"/>
    <property type="match status" value="1"/>
</dbReference>
<proteinExistence type="inferred from homology"/>
<feature type="chain" id="PRO_0000178388" description="Small ribosomal subunit protein bS21">
    <location>
        <begin position="1"/>
        <end position="58"/>
    </location>
</feature>
<feature type="region of interest" description="Disordered" evidence="2">
    <location>
        <begin position="36"/>
        <end position="58"/>
    </location>
</feature>
<feature type="compositionally biased region" description="Basic residues" evidence="2">
    <location>
        <begin position="43"/>
        <end position="58"/>
    </location>
</feature>
<reference key="1">
    <citation type="journal article" date="2002" name="Proc. Natl. Acad. Sci. U.S.A.">
        <title>Complete genome sequence and comparative genomic analysis of an emerging human pathogen, serotype V Streptococcus agalactiae.</title>
        <authorList>
            <person name="Tettelin H."/>
            <person name="Masignani V."/>
            <person name="Cieslewicz M.J."/>
            <person name="Eisen J.A."/>
            <person name="Peterson S.N."/>
            <person name="Wessels M.R."/>
            <person name="Paulsen I.T."/>
            <person name="Nelson K.E."/>
            <person name="Margarit I."/>
            <person name="Read T.D."/>
            <person name="Madoff L.C."/>
            <person name="Wolf A.M."/>
            <person name="Beanan M.J."/>
            <person name="Brinkac L.M."/>
            <person name="Daugherty S.C."/>
            <person name="DeBoy R.T."/>
            <person name="Durkin A.S."/>
            <person name="Kolonay J.F."/>
            <person name="Madupu R."/>
            <person name="Lewis M.R."/>
            <person name="Radune D."/>
            <person name="Fedorova N.B."/>
            <person name="Scanlan D."/>
            <person name="Khouri H.M."/>
            <person name="Mulligan S."/>
            <person name="Carty H.A."/>
            <person name="Cline R.T."/>
            <person name="Van Aken S.E."/>
            <person name="Gill J."/>
            <person name="Scarselli M."/>
            <person name="Mora M."/>
            <person name="Iacobini E.T."/>
            <person name="Brettoni C."/>
            <person name="Galli G."/>
            <person name="Mariani M."/>
            <person name="Vegni F."/>
            <person name="Maione D."/>
            <person name="Rinaudo D."/>
            <person name="Rappuoli R."/>
            <person name="Telford J.L."/>
            <person name="Kasper D.L."/>
            <person name="Grandi G."/>
            <person name="Fraser C.M."/>
        </authorList>
    </citation>
    <scope>NUCLEOTIDE SEQUENCE [LARGE SCALE GENOMIC DNA]</scope>
    <source>
        <strain>ATCC BAA-611 / 2603 V/R</strain>
    </source>
</reference>
<gene>
    <name evidence="1" type="primary">rpsU</name>
    <name type="ordered locus">SAG1429</name>
</gene>
<accession>P66530</accession>
<accession>Q9A0H1</accession>
<name>RS21_STRA5</name>
<protein>
    <recommendedName>
        <fullName evidence="1">Small ribosomal subunit protein bS21</fullName>
    </recommendedName>
    <alternativeName>
        <fullName evidence="3">30S ribosomal protein S21</fullName>
    </alternativeName>
</protein>
<comment type="similarity">
    <text evidence="1">Belongs to the bacterial ribosomal protein bS21 family.</text>
</comment>
<keyword id="KW-1185">Reference proteome</keyword>
<keyword id="KW-0687">Ribonucleoprotein</keyword>
<keyword id="KW-0689">Ribosomal protein</keyword>